<accession>Q2STU0</accession>
<dbReference type="EC" id="3.13.2.1" evidence="1"/>
<dbReference type="EMBL" id="CP000086">
    <property type="protein sequence ID" value="ABC37731.1"/>
    <property type="molecule type" value="Genomic_DNA"/>
</dbReference>
<dbReference type="RefSeq" id="WP_009906539.1">
    <property type="nucleotide sequence ID" value="NZ_CP008786.1"/>
</dbReference>
<dbReference type="SMR" id="Q2STU0"/>
<dbReference type="GeneID" id="45122847"/>
<dbReference type="KEGG" id="bte:BTH_I3165"/>
<dbReference type="HOGENOM" id="CLU_025194_2_1_4"/>
<dbReference type="UniPathway" id="UPA00314">
    <property type="reaction ID" value="UER00076"/>
</dbReference>
<dbReference type="Proteomes" id="UP000001930">
    <property type="component" value="Chromosome I"/>
</dbReference>
<dbReference type="GO" id="GO:0005829">
    <property type="term" value="C:cytosol"/>
    <property type="evidence" value="ECO:0007669"/>
    <property type="project" value="TreeGrafter"/>
</dbReference>
<dbReference type="GO" id="GO:0004013">
    <property type="term" value="F:adenosylhomocysteinase activity"/>
    <property type="evidence" value="ECO:0007669"/>
    <property type="project" value="UniProtKB-UniRule"/>
</dbReference>
<dbReference type="GO" id="GO:0071269">
    <property type="term" value="P:L-homocysteine biosynthetic process"/>
    <property type="evidence" value="ECO:0007669"/>
    <property type="project" value="UniProtKB-UniRule"/>
</dbReference>
<dbReference type="GO" id="GO:0006730">
    <property type="term" value="P:one-carbon metabolic process"/>
    <property type="evidence" value="ECO:0007669"/>
    <property type="project" value="UniProtKB-KW"/>
</dbReference>
<dbReference type="GO" id="GO:0033353">
    <property type="term" value="P:S-adenosylmethionine cycle"/>
    <property type="evidence" value="ECO:0007669"/>
    <property type="project" value="TreeGrafter"/>
</dbReference>
<dbReference type="CDD" id="cd00401">
    <property type="entry name" value="SAHH"/>
    <property type="match status" value="1"/>
</dbReference>
<dbReference type="FunFam" id="3.40.50.720:FF:000004">
    <property type="entry name" value="Adenosylhomocysteinase"/>
    <property type="match status" value="1"/>
</dbReference>
<dbReference type="Gene3D" id="3.40.50.1480">
    <property type="entry name" value="Adenosylhomocysteinase-like"/>
    <property type="match status" value="1"/>
</dbReference>
<dbReference type="Gene3D" id="3.40.50.720">
    <property type="entry name" value="NAD(P)-binding Rossmann-like Domain"/>
    <property type="match status" value="1"/>
</dbReference>
<dbReference type="HAMAP" id="MF_00563">
    <property type="entry name" value="AdoHcyase"/>
    <property type="match status" value="1"/>
</dbReference>
<dbReference type="InterPro" id="IPR042172">
    <property type="entry name" value="Adenosylhomocyst_ase-like_sf"/>
</dbReference>
<dbReference type="InterPro" id="IPR000043">
    <property type="entry name" value="Adenosylhomocysteinase-like"/>
</dbReference>
<dbReference type="InterPro" id="IPR015878">
    <property type="entry name" value="Ado_hCys_hydrolase_NAD-bd"/>
</dbReference>
<dbReference type="InterPro" id="IPR036291">
    <property type="entry name" value="NAD(P)-bd_dom_sf"/>
</dbReference>
<dbReference type="InterPro" id="IPR020082">
    <property type="entry name" value="S-Ado-L-homoCys_hydrolase_CS"/>
</dbReference>
<dbReference type="NCBIfam" id="TIGR00936">
    <property type="entry name" value="ahcY"/>
    <property type="match status" value="1"/>
</dbReference>
<dbReference type="NCBIfam" id="NF004005">
    <property type="entry name" value="PRK05476.2-3"/>
    <property type="match status" value="1"/>
</dbReference>
<dbReference type="PANTHER" id="PTHR23420">
    <property type="entry name" value="ADENOSYLHOMOCYSTEINASE"/>
    <property type="match status" value="1"/>
</dbReference>
<dbReference type="PANTHER" id="PTHR23420:SF0">
    <property type="entry name" value="ADENOSYLHOMOCYSTEINASE"/>
    <property type="match status" value="1"/>
</dbReference>
<dbReference type="Pfam" id="PF05221">
    <property type="entry name" value="AdoHcyase"/>
    <property type="match status" value="1"/>
</dbReference>
<dbReference type="Pfam" id="PF00670">
    <property type="entry name" value="AdoHcyase_NAD"/>
    <property type="match status" value="1"/>
</dbReference>
<dbReference type="PIRSF" id="PIRSF001109">
    <property type="entry name" value="Ad_hcy_hydrolase"/>
    <property type="match status" value="1"/>
</dbReference>
<dbReference type="SMART" id="SM00996">
    <property type="entry name" value="AdoHcyase"/>
    <property type="match status" value="1"/>
</dbReference>
<dbReference type="SMART" id="SM00997">
    <property type="entry name" value="AdoHcyase_NAD"/>
    <property type="match status" value="1"/>
</dbReference>
<dbReference type="SUPFAM" id="SSF52283">
    <property type="entry name" value="Formate/glycerate dehydrogenase catalytic domain-like"/>
    <property type="match status" value="1"/>
</dbReference>
<dbReference type="SUPFAM" id="SSF51735">
    <property type="entry name" value="NAD(P)-binding Rossmann-fold domains"/>
    <property type="match status" value="1"/>
</dbReference>
<dbReference type="PROSITE" id="PS00738">
    <property type="entry name" value="ADOHCYASE_1"/>
    <property type="match status" value="1"/>
</dbReference>
<dbReference type="PROSITE" id="PS00739">
    <property type="entry name" value="ADOHCYASE_2"/>
    <property type="match status" value="1"/>
</dbReference>
<feature type="chain" id="PRO_1000024720" description="Adenosylhomocysteinase">
    <location>
        <begin position="1"/>
        <end position="473"/>
    </location>
</feature>
<feature type="binding site" evidence="1">
    <location>
        <position position="64"/>
    </location>
    <ligand>
        <name>substrate</name>
    </ligand>
</feature>
<feature type="binding site" evidence="1">
    <location>
        <position position="139"/>
    </location>
    <ligand>
        <name>substrate</name>
    </ligand>
</feature>
<feature type="binding site" evidence="1">
    <location>
        <position position="199"/>
    </location>
    <ligand>
        <name>substrate</name>
    </ligand>
</feature>
<feature type="binding site" evidence="1">
    <location>
        <begin position="200"/>
        <end position="202"/>
    </location>
    <ligand>
        <name>NAD(+)</name>
        <dbReference type="ChEBI" id="CHEBI:57540"/>
    </ligand>
</feature>
<feature type="binding site" evidence="1">
    <location>
        <position position="229"/>
    </location>
    <ligand>
        <name>substrate</name>
    </ligand>
</feature>
<feature type="binding site" evidence="1">
    <location>
        <position position="233"/>
    </location>
    <ligand>
        <name>substrate</name>
    </ligand>
</feature>
<feature type="binding site" evidence="1">
    <location>
        <position position="234"/>
    </location>
    <ligand>
        <name>NAD(+)</name>
        <dbReference type="ChEBI" id="CHEBI:57540"/>
    </ligand>
</feature>
<feature type="binding site" evidence="1">
    <location>
        <begin position="263"/>
        <end position="268"/>
    </location>
    <ligand>
        <name>NAD(+)</name>
        <dbReference type="ChEBI" id="CHEBI:57540"/>
    </ligand>
</feature>
<feature type="binding site" evidence="1">
    <location>
        <position position="286"/>
    </location>
    <ligand>
        <name>NAD(+)</name>
        <dbReference type="ChEBI" id="CHEBI:57540"/>
    </ligand>
</feature>
<feature type="binding site" evidence="1">
    <location>
        <position position="321"/>
    </location>
    <ligand>
        <name>NAD(+)</name>
        <dbReference type="ChEBI" id="CHEBI:57540"/>
    </ligand>
</feature>
<feature type="binding site" evidence="1">
    <location>
        <begin position="342"/>
        <end position="344"/>
    </location>
    <ligand>
        <name>NAD(+)</name>
        <dbReference type="ChEBI" id="CHEBI:57540"/>
    </ligand>
</feature>
<feature type="binding site" evidence="1">
    <location>
        <position position="387"/>
    </location>
    <ligand>
        <name>NAD(+)</name>
        <dbReference type="ChEBI" id="CHEBI:57540"/>
    </ligand>
</feature>
<gene>
    <name evidence="1" type="primary">ahcY</name>
    <name type="ordered locus">BTH_I3165</name>
</gene>
<evidence type="ECO:0000255" key="1">
    <source>
        <dbReference type="HAMAP-Rule" id="MF_00563"/>
    </source>
</evidence>
<sequence length="473" mass="52160">MNAAVIDSNSAQDYVVADIALAGWGRKELNIAETEMPGLVQIRDEYKAQQPLKGARIAGSLHMTIQTGVLIETLKALGADVRWASCNIFSTQDHAAAAIVEAGTPVFAFKGESLDEYWEFSHRIFEWPNGEFANMILDDGGDATLLLILGSKAEKDRSVIAKPTNEEEVALFKSIERHLEIDGSWYSKRLAHIKGVTEETTTGVHRLYQMEKDGRLPFPAFNVNDSVTKSKFDNLYGCRESLVDGIKRATDVMIAGKIAVVAGYGDVGKGCAQSLRGLGATVWVTEIDPICALQAAMEGYRVVTMEYAADKADIFVTATGNYHVINHDHMKAMRHNAIVCNIGHFDSEIDVASTRQYQWENIKPQVDHIIFPDGKRVILLAEGRLVNLGCATGHPSFVMSNSFTNQTLAQIELFTRGGEYANKVYVLPKHLDEKVARLHLARIGAQLSELSDDQAAYIGVPKAGPFKPDHYRY</sequence>
<keyword id="KW-0963">Cytoplasm</keyword>
<keyword id="KW-0378">Hydrolase</keyword>
<keyword id="KW-0520">NAD</keyword>
<keyword id="KW-0554">One-carbon metabolism</keyword>
<proteinExistence type="inferred from homology"/>
<protein>
    <recommendedName>
        <fullName evidence="1">Adenosylhomocysteinase</fullName>
        <ecNumber evidence="1">3.13.2.1</ecNumber>
    </recommendedName>
    <alternativeName>
        <fullName evidence="1">S-adenosyl-L-homocysteine hydrolase</fullName>
        <shortName evidence="1">AdoHcyase</shortName>
    </alternativeName>
</protein>
<comment type="function">
    <text evidence="1">May play a key role in the regulation of the intracellular concentration of adenosylhomocysteine.</text>
</comment>
<comment type="catalytic activity">
    <reaction evidence="1">
        <text>S-adenosyl-L-homocysteine + H2O = L-homocysteine + adenosine</text>
        <dbReference type="Rhea" id="RHEA:21708"/>
        <dbReference type="ChEBI" id="CHEBI:15377"/>
        <dbReference type="ChEBI" id="CHEBI:16335"/>
        <dbReference type="ChEBI" id="CHEBI:57856"/>
        <dbReference type="ChEBI" id="CHEBI:58199"/>
        <dbReference type="EC" id="3.13.2.1"/>
    </reaction>
</comment>
<comment type="cofactor">
    <cofactor evidence="1">
        <name>NAD(+)</name>
        <dbReference type="ChEBI" id="CHEBI:57540"/>
    </cofactor>
    <text evidence="1">Binds 1 NAD(+) per subunit.</text>
</comment>
<comment type="pathway">
    <text evidence="1">Amino-acid biosynthesis; L-homocysteine biosynthesis; L-homocysteine from S-adenosyl-L-homocysteine: step 1/1.</text>
</comment>
<comment type="subcellular location">
    <subcellularLocation>
        <location evidence="1">Cytoplasm</location>
    </subcellularLocation>
</comment>
<comment type="similarity">
    <text evidence="1">Belongs to the adenosylhomocysteinase family.</text>
</comment>
<organism>
    <name type="scientific">Burkholderia thailandensis (strain ATCC 700388 / DSM 13276 / CCUG 48851 / CIP 106301 / E264)</name>
    <dbReference type="NCBI Taxonomy" id="271848"/>
    <lineage>
        <taxon>Bacteria</taxon>
        <taxon>Pseudomonadati</taxon>
        <taxon>Pseudomonadota</taxon>
        <taxon>Betaproteobacteria</taxon>
        <taxon>Burkholderiales</taxon>
        <taxon>Burkholderiaceae</taxon>
        <taxon>Burkholderia</taxon>
        <taxon>pseudomallei group</taxon>
    </lineage>
</organism>
<name>SAHH_BURTA</name>
<reference key="1">
    <citation type="journal article" date="2005" name="BMC Genomics">
        <title>Bacterial genome adaptation to niches: divergence of the potential virulence genes in three Burkholderia species of different survival strategies.</title>
        <authorList>
            <person name="Kim H.S."/>
            <person name="Schell M.A."/>
            <person name="Yu Y."/>
            <person name="Ulrich R.L."/>
            <person name="Sarria S.H."/>
            <person name="Nierman W.C."/>
            <person name="DeShazer D."/>
        </authorList>
    </citation>
    <scope>NUCLEOTIDE SEQUENCE [LARGE SCALE GENOMIC DNA]</scope>
    <source>
        <strain>ATCC 700388 / DSM 13276 / CCUG 48851 / CIP 106301 / E264</strain>
    </source>
</reference>